<evidence type="ECO:0000250" key="1"/>
<evidence type="ECO:0000250" key="2">
    <source>
        <dbReference type="UniProtKB" id="P11940"/>
    </source>
</evidence>
<evidence type="ECO:0000250" key="3">
    <source>
        <dbReference type="UniProtKB" id="P29341"/>
    </source>
</evidence>
<evidence type="ECO:0000255" key="4">
    <source>
        <dbReference type="PROSITE-ProRule" id="PRU00176"/>
    </source>
</evidence>
<evidence type="ECO:0000255" key="5">
    <source>
        <dbReference type="PROSITE-ProRule" id="PRU00641"/>
    </source>
</evidence>
<evidence type="ECO:0000305" key="6"/>
<proteinExistence type="evidence at transcript level"/>
<protein>
    <recommendedName>
        <fullName>Polyadenylate-binding protein 1</fullName>
        <shortName>PABP-1</shortName>
        <shortName>Poly(A)-binding protein 1</shortName>
    </recommendedName>
</protein>
<sequence length="636" mass="70671">MNPSAPSYPMASLYVGDLHPDVTEAMLYEKFSPAGPILSIRVCRDMITRRSLGYAYVNFQQPADAERALDTMNFDVIKGKPVRIMWSQRDPSLRKSGVGNIFIKNLDKSIDNKALYDTFSAFGNILSCKVVCDENGSKGYGFVHFETQEAAERAIEKMNGMLLNDRKVFVGRFKSRKEREAELGARAKEFTNVYIKNFGEDMDDERLKDLFGKFGPALSVKVMTDESGKSKGFGFVSFERHEDAQKAVDEMNGKELNGKQIYVGRAQKKVERQTELKRKFEQMKQDRITRYQGVNLYVKNLDDGIDDERLRKEFSPFGTITSAKVMMEGGRSKGFGFVCFSSPEEATKAVTEMNGRIVATKPLYVALAQRKEERQAHLTNQYMQRMASVRAVPNPVINPYQPAPPSGYFMAAIPQTQNRAAYYPPSQIAQLRPSPRWTAQGARPHPFQNMPGAIRPAAPRPPFSTMRPASSQVPRVMSTQRVANTSTQTMGPRPAAAAAAATPAVRTVPQYKYAAGVRNPQQHLNAQPQVTMQQPAVHVQGQEPLTASMLASAPPQEQKQMLGERLFPLIQAMHPTLAGKITGMLLEIDNSELLHMLESPESLRSKVDEAVAVLQAHQAKEAAQKAVNSATGVPTV</sequence>
<accession>P61286</accession>
<accession>Q3T0J7</accession>
<feature type="chain" id="PRO_0000081697" description="Polyadenylate-binding protein 1">
    <location>
        <begin position="1"/>
        <end position="636"/>
    </location>
</feature>
<feature type="domain" description="RRM 1" evidence="4">
    <location>
        <begin position="11"/>
        <end position="89"/>
    </location>
</feature>
<feature type="domain" description="RRM 2" evidence="4">
    <location>
        <begin position="99"/>
        <end position="175"/>
    </location>
</feature>
<feature type="domain" description="RRM 3" evidence="4">
    <location>
        <begin position="191"/>
        <end position="268"/>
    </location>
</feature>
<feature type="domain" description="RRM 4" evidence="4">
    <location>
        <begin position="294"/>
        <end position="370"/>
    </location>
</feature>
<feature type="domain" description="PABC" evidence="5">
    <location>
        <begin position="542"/>
        <end position="619"/>
    </location>
</feature>
<feature type="region of interest" description="CSDE1-binding" evidence="1">
    <location>
        <begin position="166"/>
        <end position="289"/>
    </location>
</feature>
<feature type="modified residue" description="N-acetylmethionine" evidence="2">
    <location>
        <position position="1"/>
    </location>
</feature>
<feature type="modified residue" description="N6-methyllysine" evidence="2">
    <location>
        <position position="299"/>
    </location>
</feature>
<feature type="modified residue" description="Phosphoserine" evidence="2">
    <location>
        <position position="315"/>
    </location>
</feature>
<feature type="modified residue" description="Phosphothreonine" evidence="2">
    <location>
        <position position="319"/>
    </location>
</feature>
<feature type="modified residue" description="Omega-N-methylarginine" evidence="2">
    <location>
        <position position="385"/>
    </location>
</feature>
<feature type="modified residue" description="Omega-N-methylarginine" evidence="2">
    <location>
        <position position="419"/>
    </location>
</feature>
<feature type="modified residue" description="Omega-N-methylarginine" evidence="2">
    <location>
        <position position="432"/>
    </location>
</feature>
<feature type="modified residue" description="Omega-N-methylarginine" evidence="2">
    <location>
        <position position="436"/>
    </location>
</feature>
<feature type="modified residue" description="Omega-N-methylated arginine; by CARM1" evidence="2">
    <location>
        <position position="455"/>
    </location>
</feature>
<feature type="modified residue" description="Omega-N-methylated arginine; by CARM1" evidence="2">
    <location>
        <position position="460"/>
    </location>
</feature>
<feature type="modified residue" description="Omega-N-methylarginine" evidence="3">
    <location>
        <position position="475"/>
    </location>
</feature>
<feature type="modified residue" description="Omega-N-methylarginine" evidence="2">
    <location>
        <position position="481"/>
    </location>
</feature>
<feature type="modified residue" description="Asymmetric dimethylarginine; alternate" evidence="2">
    <location>
        <position position="493"/>
    </location>
</feature>
<feature type="modified residue" description="Dimethylated arginine; alternate" evidence="2">
    <location>
        <position position="493"/>
    </location>
</feature>
<feature type="modified residue" description="Omega-N-methylarginine; alternate" evidence="2">
    <location>
        <position position="493"/>
    </location>
</feature>
<feature type="modified residue" description="Omega-N-methylarginine" evidence="2">
    <location>
        <position position="506"/>
    </location>
</feature>
<feature type="modified residue" description="N6-acetyllysine" evidence="2">
    <location>
        <position position="512"/>
    </location>
</feature>
<feature type="modified residue" description="Omega-N-methylarginine" evidence="2">
    <location>
        <position position="518"/>
    </location>
</feature>
<name>PABP1_BOVIN</name>
<comment type="function">
    <text evidence="2">Binds the poly(A) tail of mRNA, including that of its own transcript, and regulates processes of mRNA metabolism such as pre-mRNA splicing and mRNA stability. Its function in translational initiation regulation can either be enhanced by PAIP1 or repressed by PAIP2. Can probably bind to cytoplasmic RNA sequences other than poly(A) in vivo. Binds to N6-methyladenosine (m6A)-containing mRNAs and contributes to MYC stability by binding to m6A-containing MYC mRNAs. Involved in translationally coupled mRNA turnover. Implicated with other RNA-binding proteins in the cytoplasmic deadenylation/translational and decay interplay of the FOS mRNA mediated by the major coding-region determinant of instability (mCRD) domain. Involved in regulation of nonsense-mediated decay (NMD) of mRNAs containing premature stop codons; for the recognition of premature termination codons (PTC) and initiation of NMD a competitive interaction between UPF1 and PABPC1 with the ribosome-bound release factors is proposed. By binding to long poly(A) tails, may protect them from uridylation by ZCCHC6/ZCCHC11 and hence contribute to mRNA stability.</text>
</comment>
<comment type="subunit">
    <text evidence="2 3">May form homodimers. Component of a multisubunit autoregulatory ribonucleoprotein complex (ARC), at least composed of IGF2BP1, PABPC1 and CSDE1. Directly interacts with IGF2BP1. Part of a complex associated with the FOS mCRD domain and consisting of HNRPD, SYNCRIP, PAIP1 and CSDE1/UNR. Interacts with PAIP1 and PAIP2 (via the PABPC1-interacting motifs PAM1 and PAM2). Interacts with PAIP1 with a 1:1 stoichiometry and with PAIP2 with a 1:2 stoichiometry. The interaction with CSDE1 is direct and RNA-independent (By similarity). Found in a mRNP complex with YBX2. Interacts with TENT2/GLD2 (By similarity). Identified in the spliceosome C complex. Identified in a mRNP complex, at least composed of DHX9, DDX3X, ELAVL1, HNRNPU, IGF2BP1, ILF3, PABPC1, PCBP2, PTBP2, STAU1, STAU2, SYNCRIP and YBX1. The interaction with DDX3X is direct and RNA-independent. This interaction increases in stressed cells and decreases during cell recovery. Identified in a IGF2BP1-dependent mRNP granule complex containing untranslated mRNAs. Interacts with NXF1/TAP (By similarity). Interacts with PIWIL1 (By similarity). Interacts with AGO1, AGO2, GSPT1 and GSPT2. Interacts with LARP4B. Interacts (via the second and third RRM domains and the C-terminus) with PAIP2B (via central acidic portion and C-terminus). Forms a complex with LARP1 and SHFL. Interacts with LARP4. Interacts with ZFC3H1 in a RNase-sensitive manner. Interacts with TRIM71 (via NHL repeats) in an RNA-dependent manner. Interacts with TENT5C; the interaction has no effect on TENT5C poly(A) polymerase function. Interacts with G3BP1 and G3BP2 (By similarity). Interacts with ENDOV; the interaction is RNA-dependent and stimulates ENDOV activity (By similarity). Interacts with UPF1; the interaction is RNA-dependent (By similarity). Interacts with IGF2BP2 and IGF2BP3. May interact with SETX. Interacts with RBM46. Interacts with PAN3 (By similarity).</text>
</comment>
<comment type="subcellular location">
    <subcellularLocation>
        <location evidence="2">Cytoplasm</location>
    </subcellularLocation>
    <subcellularLocation>
        <location evidence="2">Cytoplasm</location>
        <location evidence="2">Stress granule</location>
    </subcellularLocation>
    <subcellularLocation>
        <location evidence="2">Nucleus</location>
    </subcellularLocation>
    <subcellularLocation>
        <location evidence="2">Cell projection</location>
        <location evidence="2">Lamellipodium</location>
    </subcellularLocation>
    <text evidence="2">Localized in cytoplasmic mRNP granules containing untranslated mRNAs (By similarity). Shuttles between the cytoplasm and the nucleus (By similarity). During stress and in the absence of DDX3X, localizes to the nucleus (By similarity). At the leading edge of migrating fibroblasts, colocalizes with DDX3X (By similarity). Relocalizes to cytoplasmic stress granules upon cellular stress where it colocalizes with ENDOV (By similarity).</text>
</comment>
<comment type="domain">
    <text evidence="2">The RNA-binding domains RRM1 and RRM2 and the C-terminus (last 138 amino acids) regions interact with the PABPC1-interacting motif-1 (PAM1) and -2 (PAM2) of PAIP1, respectively.</text>
</comment>
<comment type="domain">
    <text evidence="2">The RNA-binding domains RRM2 and RRM3 and the C-terminus (last 138 amino acids) regions interact with the PABPC1-interacting motif-1 (PAM1) and -2 (PAM2) of PAIP2, respectively.</text>
</comment>
<comment type="PTM">
    <text evidence="2">Phosphorylated by MAPKAPK2.</text>
</comment>
<comment type="PTM">
    <text evidence="2">Methylated by CARM1. Arg-493 is dimethylated, probably to asymmetric dimethylarginine (By similarity).</text>
</comment>
<comment type="similarity">
    <text evidence="6">Belongs to the polyadenylate-binding protein type-1 family.</text>
</comment>
<gene>
    <name type="primary">PABPC1</name>
    <name type="synonym">PABP1</name>
</gene>
<reference key="1">
    <citation type="journal article" date="2001" name="Asian-Australas. J. Anim. Sci.">
        <title>Cloning and expression of bovine polyadenylate binding protein 1 cDNA in mammary tissues.</title>
        <authorList>
            <person name="Kim J.H."/>
            <person name="Jeon D.H."/>
            <person name="Choi Y.J."/>
            <person name="Baik M.G."/>
        </authorList>
        <dbReference type="AGRICOLA" id="IND23230985"/>
    </citation>
    <scope>NUCLEOTIDE SEQUENCE [MRNA]</scope>
    <source>
        <strain>Holstein</strain>
        <tissue>Mammary gland</tissue>
    </source>
</reference>
<reference key="2">
    <citation type="submission" date="2005-08" db="EMBL/GenBank/DDBJ databases">
        <authorList>
            <consortium name="NIH - Mammalian Gene Collection (MGC) project"/>
        </authorList>
    </citation>
    <scope>NUCLEOTIDE SEQUENCE [LARGE SCALE MRNA]</scope>
    <source>
        <strain>Crossbred X Angus</strain>
        <tissue>Ileum</tissue>
    </source>
</reference>
<dbReference type="EMBL" id="AJ401269">
    <property type="protein sequence ID" value="CAB96752.1"/>
    <property type="molecule type" value="mRNA"/>
</dbReference>
<dbReference type="EMBL" id="BC102365">
    <property type="protein sequence ID" value="AAI02366.1"/>
    <property type="molecule type" value="mRNA"/>
</dbReference>
<dbReference type="RefSeq" id="NP_776993.1">
    <property type="nucleotide sequence ID" value="NM_174568.3"/>
</dbReference>
<dbReference type="BMRB" id="P61286"/>
<dbReference type="SMR" id="P61286"/>
<dbReference type="FunCoup" id="P61286">
    <property type="interactions" value="4022"/>
</dbReference>
<dbReference type="IntAct" id="P61286">
    <property type="interactions" value="1"/>
</dbReference>
<dbReference type="STRING" id="9913.ENSBTAP00000056644"/>
<dbReference type="PaxDb" id="9913-ENSBTAP00000056644"/>
<dbReference type="PeptideAtlas" id="P61286"/>
<dbReference type="Ensembl" id="ENSBTAT00000064237.3">
    <property type="protein sequence ID" value="ENSBTAP00000056644.1"/>
    <property type="gene ID" value="ENSBTAG00000046358.3"/>
</dbReference>
<dbReference type="GeneID" id="282296"/>
<dbReference type="KEGG" id="bta:282296"/>
<dbReference type="CTD" id="26986"/>
<dbReference type="VEuPathDB" id="HostDB:ENSBTAG00000046358"/>
<dbReference type="VGNC" id="VGNC:53870">
    <property type="gene designation" value="PABPC1"/>
</dbReference>
<dbReference type="eggNOG" id="KOG0123">
    <property type="taxonomic scope" value="Eukaryota"/>
</dbReference>
<dbReference type="GeneTree" id="ENSGT00940000153773"/>
<dbReference type="HOGENOM" id="CLU_012062_22_2_1"/>
<dbReference type="InParanoid" id="P61286"/>
<dbReference type="OMA" id="MNGRMLN"/>
<dbReference type="OrthoDB" id="19742at2759"/>
<dbReference type="TreeFam" id="TF300458"/>
<dbReference type="Reactome" id="R-BTA-156827">
    <property type="pathway name" value="L13a-mediated translational silencing of Ceruloplasmin expression"/>
</dbReference>
<dbReference type="Reactome" id="R-BTA-429947">
    <property type="pathway name" value="Deadenylation of mRNA"/>
</dbReference>
<dbReference type="Reactome" id="R-BTA-450408">
    <property type="pathway name" value="AUF1 (hnRNP D0) binds and destabilizes mRNA"/>
</dbReference>
<dbReference type="Reactome" id="R-BTA-72649">
    <property type="pathway name" value="Translation initiation complex formation"/>
</dbReference>
<dbReference type="Reactome" id="R-BTA-975956">
    <property type="pathway name" value="Nonsense Mediated Decay (NMD) independent of the Exon Junction Complex (EJC)"/>
</dbReference>
<dbReference type="Reactome" id="R-BTA-975957">
    <property type="pathway name" value="Nonsense Mediated Decay (NMD) enhanced by the Exon Junction Complex (EJC)"/>
</dbReference>
<dbReference type="Proteomes" id="UP000009136">
    <property type="component" value="Chromosome 14"/>
</dbReference>
<dbReference type="Bgee" id="ENSBTAG00000046358">
    <property type="expression patterns" value="Expressed in spermatid and 104 other cell types or tissues"/>
</dbReference>
<dbReference type="GO" id="GO:0071013">
    <property type="term" value="C:catalytic step 2 spliceosome"/>
    <property type="evidence" value="ECO:0007669"/>
    <property type="project" value="Ensembl"/>
</dbReference>
<dbReference type="GO" id="GO:0031252">
    <property type="term" value="C:cell leading edge"/>
    <property type="evidence" value="ECO:0000250"/>
    <property type="project" value="UniProtKB"/>
</dbReference>
<dbReference type="GO" id="GO:0005737">
    <property type="term" value="C:cytoplasm"/>
    <property type="evidence" value="ECO:0000250"/>
    <property type="project" value="UniProtKB"/>
</dbReference>
<dbReference type="GO" id="GO:0010494">
    <property type="term" value="C:cytoplasmic stress granule"/>
    <property type="evidence" value="ECO:0000250"/>
    <property type="project" value="UniProtKB"/>
</dbReference>
<dbReference type="GO" id="GO:0005829">
    <property type="term" value="C:cytosol"/>
    <property type="evidence" value="ECO:0000318"/>
    <property type="project" value="GO_Central"/>
</dbReference>
<dbReference type="GO" id="GO:0030027">
    <property type="term" value="C:lamellipodium"/>
    <property type="evidence" value="ECO:0007669"/>
    <property type="project" value="UniProtKB-SubCell"/>
</dbReference>
<dbReference type="GO" id="GO:0106002">
    <property type="term" value="C:mCRD-mediated mRNA stability complex"/>
    <property type="evidence" value="ECO:0007669"/>
    <property type="project" value="Ensembl"/>
</dbReference>
<dbReference type="GO" id="GO:0005634">
    <property type="term" value="C:nucleus"/>
    <property type="evidence" value="ECO:0000318"/>
    <property type="project" value="GO_Central"/>
</dbReference>
<dbReference type="GO" id="GO:1990904">
    <property type="term" value="C:ribonucleoprotein complex"/>
    <property type="evidence" value="ECO:0000250"/>
    <property type="project" value="UniProtKB"/>
</dbReference>
<dbReference type="GO" id="GO:0003730">
    <property type="term" value="F:mRNA 3'-UTR binding"/>
    <property type="evidence" value="ECO:0000318"/>
    <property type="project" value="GO_Central"/>
</dbReference>
<dbReference type="GO" id="GO:0008143">
    <property type="term" value="F:poly(A) binding"/>
    <property type="evidence" value="ECO:0000318"/>
    <property type="project" value="GO_Central"/>
</dbReference>
<dbReference type="GO" id="GO:0008266">
    <property type="term" value="F:poly(U) RNA binding"/>
    <property type="evidence" value="ECO:0000318"/>
    <property type="project" value="GO_Central"/>
</dbReference>
<dbReference type="GO" id="GO:0070934">
    <property type="term" value="P:CRD-mediated mRNA stabilization"/>
    <property type="evidence" value="ECO:0007669"/>
    <property type="project" value="Ensembl"/>
</dbReference>
<dbReference type="GO" id="GO:0006397">
    <property type="term" value="P:mRNA processing"/>
    <property type="evidence" value="ECO:0007669"/>
    <property type="project" value="UniProtKB-KW"/>
</dbReference>
<dbReference type="GO" id="GO:1900152">
    <property type="term" value="P:negative regulation of nuclear-transcribed mRNA catabolic process, deadenylation-dependent decay"/>
    <property type="evidence" value="ECO:0007669"/>
    <property type="project" value="Ensembl"/>
</dbReference>
<dbReference type="GO" id="GO:2000623">
    <property type="term" value="P:negative regulation of nuclear-transcribed mRNA catabolic process, nonsense-mediated decay"/>
    <property type="evidence" value="ECO:0000250"/>
    <property type="project" value="UniProtKB"/>
</dbReference>
<dbReference type="GO" id="GO:0000184">
    <property type="term" value="P:nuclear-transcribed mRNA catabolic process, nonsense-mediated decay"/>
    <property type="evidence" value="ECO:0007669"/>
    <property type="project" value="UniProtKB-KW"/>
</dbReference>
<dbReference type="GO" id="GO:2000767">
    <property type="term" value="P:positive regulation of cytoplasmic translation"/>
    <property type="evidence" value="ECO:0007669"/>
    <property type="project" value="Ensembl"/>
</dbReference>
<dbReference type="GO" id="GO:1900153">
    <property type="term" value="P:positive regulation of nuclear-transcribed mRNA catabolic process, deadenylation-dependent decay"/>
    <property type="evidence" value="ECO:0000250"/>
    <property type="project" value="UniProtKB"/>
</dbReference>
<dbReference type="GO" id="GO:0060213">
    <property type="term" value="P:positive regulation of nuclear-transcribed mRNA poly(A) tail shortening"/>
    <property type="evidence" value="ECO:0000250"/>
    <property type="project" value="UniProtKB"/>
</dbReference>
<dbReference type="GO" id="GO:0045070">
    <property type="term" value="P:positive regulation of viral genome replication"/>
    <property type="evidence" value="ECO:0007669"/>
    <property type="project" value="Ensembl"/>
</dbReference>
<dbReference type="GO" id="GO:0031047">
    <property type="term" value="P:regulatory ncRNA-mediated gene silencing"/>
    <property type="evidence" value="ECO:0000250"/>
    <property type="project" value="UniProtKB"/>
</dbReference>
<dbReference type="GO" id="GO:0008380">
    <property type="term" value="P:RNA splicing"/>
    <property type="evidence" value="ECO:0007669"/>
    <property type="project" value="UniProtKB-KW"/>
</dbReference>
<dbReference type="CDD" id="cd12378">
    <property type="entry name" value="RRM1_I_PABPs"/>
    <property type="match status" value="1"/>
</dbReference>
<dbReference type="CDD" id="cd12379">
    <property type="entry name" value="RRM2_I_PABPs"/>
    <property type="match status" value="1"/>
</dbReference>
<dbReference type="CDD" id="cd12380">
    <property type="entry name" value="RRM3_I_PABPs"/>
    <property type="match status" value="1"/>
</dbReference>
<dbReference type="CDD" id="cd12381">
    <property type="entry name" value="RRM4_I_PABPs"/>
    <property type="match status" value="1"/>
</dbReference>
<dbReference type="FunFam" id="1.10.1900.10:FF:000001">
    <property type="entry name" value="Polyadenylate-binding protein"/>
    <property type="match status" value="1"/>
</dbReference>
<dbReference type="FunFam" id="3.30.70.330:FF:000003">
    <property type="entry name" value="Polyadenylate-binding protein"/>
    <property type="match status" value="1"/>
</dbReference>
<dbReference type="FunFam" id="3.30.70.330:FF:000021">
    <property type="entry name" value="Polyadenylate-binding protein"/>
    <property type="match status" value="1"/>
</dbReference>
<dbReference type="FunFam" id="3.30.70.330:FF:000042">
    <property type="entry name" value="Polyadenylate-binding protein"/>
    <property type="match status" value="1"/>
</dbReference>
<dbReference type="FunFam" id="3.30.70.330:FF:000154">
    <property type="entry name" value="Polyadenylate-binding protein"/>
    <property type="match status" value="1"/>
</dbReference>
<dbReference type="Gene3D" id="3.30.70.330">
    <property type="match status" value="4"/>
</dbReference>
<dbReference type="Gene3D" id="1.10.1900.10">
    <property type="entry name" value="c-terminal domain of poly(a) binding protein"/>
    <property type="match status" value="1"/>
</dbReference>
<dbReference type="InterPro" id="IPR012677">
    <property type="entry name" value="Nucleotide-bd_a/b_plait_sf"/>
</dbReference>
<dbReference type="InterPro" id="IPR036053">
    <property type="entry name" value="PABP-dom"/>
</dbReference>
<dbReference type="InterPro" id="IPR006515">
    <property type="entry name" value="PABP_1234"/>
</dbReference>
<dbReference type="InterPro" id="IPR002004">
    <property type="entry name" value="PABP_HYD_C"/>
</dbReference>
<dbReference type="InterPro" id="IPR034364">
    <property type="entry name" value="PABP_RRM1"/>
</dbReference>
<dbReference type="InterPro" id="IPR035979">
    <property type="entry name" value="RBD_domain_sf"/>
</dbReference>
<dbReference type="InterPro" id="IPR045305">
    <property type="entry name" value="RRM2_I_PABPs"/>
</dbReference>
<dbReference type="InterPro" id="IPR000504">
    <property type="entry name" value="RRM_dom"/>
</dbReference>
<dbReference type="InterPro" id="IPR003954">
    <property type="entry name" value="RRM_dom_euk"/>
</dbReference>
<dbReference type="NCBIfam" id="TIGR01628">
    <property type="entry name" value="PABP-1234"/>
    <property type="match status" value="1"/>
</dbReference>
<dbReference type="PANTHER" id="PTHR24012">
    <property type="entry name" value="RNA BINDING PROTEIN"/>
    <property type="match status" value="1"/>
</dbReference>
<dbReference type="Pfam" id="PF00658">
    <property type="entry name" value="MLLE"/>
    <property type="match status" value="1"/>
</dbReference>
<dbReference type="Pfam" id="PF00076">
    <property type="entry name" value="RRM_1"/>
    <property type="match status" value="4"/>
</dbReference>
<dbReference type="SMART" id="SM00517">
    <property type="entry name" value="PolyA"/>
    <property type="match status" value="1"/>
</dbReference>
<dbReference type="SMART" id="SM00360">
    <property type="entry name" value="RRM"/>
    <property type="match status" value="4"/>
</dbReference>
<dbReference type="SMART" id="SM00361">
    <property type="entry name" value="RRM_1"/>
    <property type="match status" value="3"/>
</dbReference>
<dbReference type="SUPFAM" id="SSF63570">
    <property type="entry name" value="PABC (PABP) domain"/>
    <property type="match status" value="1"/>
</dbReference>
<dbReference type="SUPFAM" id="SSF54928">
    <property type="entry name" value="RNA-binding domain, RBD"/>
    <property type="match status" value="2"/>
</dbReference>
<dbReference type="PROSITE" id="PS51309">
    <property type="entry name" value="PABC"/>
    <property type="match status" value="1"/>
</dbReference>
<dbReference type="PROSITE" id="PS50102">
    <property type="entry name" value="RRM"/>
    <property type="match status" value="4"/>
</dbReference>
<keyword id="KW-0007">Acetylation</keyword>
<keyword id="KW-0966">Cell projection</keyword>
<keyword id="KW-0963">Cytoplasm</keyword>
<keyword id="KW-0488">Methylation</keyword>
<keyword id="KW-0507">mRNA processing</keyword>
<keyword id="KW-0508">mRNA splicing</keyword>
<keyword id="KW-0866">Nonsense-mediated mRNA decay</keyword>
<keyword id="KW-0539">Nucleus</keyword>
<keyword id="KW-0597">Phosphoprotein</keyword>
<keyword id="KW-1185">Reference proteome</keyword>
<keyword id="KW-0677">Repeat</keyword>
<keyword id="KW-0694">RNA-binding</keyword>
<keyword id="KW-0747">Spliceosome</keyword>
<organism>
    <name type="scientific">Bos taurus</name>
    <name type="common">Bovine</name>
    <dbReference type="NCBI Taxonomy" id="9913"/>
    <lineage>
        <taxon>Eukaryota</taxon>
        <taxon>Metazoa</taxon>
        <taxon>Chordata</taxon>
        <taxon>Craniata</taxon>
        <taxon>Vertebrata</taxon>
        <taxon>Euteleostomi</taxon>
        <taxon>Mammalia</taxon>
        <taxon>Eutheria</taxon>
        <taxon>Laurasiatheria</taxon>
        <taxon>Artiodactyla</taxon>
        <taxon>Ruminantia</taxon>
        <taxon>Pecora</taxon>
        <taxon>Bovidae</taxon>
        <taxon>Bovinae</taxon>
        <taxon>Bos</taxon>
    </lineage>
</organism>